<dbReference type="EMBL" id="CP000555">
    <property type="protein sequence ID" value="ABM95857.1"/>
    <property type="molecule type" value="Genomic_DNA"/>
</dbReference>
<dbReference type="STRING" id="420662.Mpe_A2904"/>
<dbReference type="KEGG" id="mpt:Mpe_A2904"/>
<dbReference type="eggNOG" id="COG5487">
    <property type="taxonomic scope" value="Bacteria"/>
</dbReference>
<dbReference type="HOGENOM" id="CLU_187346_0_1_4"/>
<dbReference type="Proteomes" id="UP000000366">
    <property type="component" value="Chromosome"/>
</dbReference>
<dbReference type="GO" id="GO:0005886">
    <property type="term" value="C:plasma membrane"/>
    <property type="evidence" value="ECO:0007669"/>
    <property type="project" value="UniProtKB-SubCell"/>
</dbReference>
<dbReference type="HAMAP" id="MF_01361">
    <property type="entry name" value="UPF0391"/>
    <property type="match status" value="1"/>
</dbReference>
<dbReference type="InterPro" id="IPR009760">
    <property type="entry name" value="DUF1328"/>
</dbReference>
<dbReference type="NCBIfam" id="NF010226">
    <property type="entry name" value="PRK13682.1-1"/>
    <property type="match status" value="1"/>
</dbReference>
<dbReference type="NCBIfam" id="NF010229">
    <property type="entry name" value="PRK13682.1-4"/>
    <property type="match status" value="1"/>
</dbReference>
<dbReference type="Pfam" id="PF07043">
    <property type="entry name" value="DUF1328"/>
    <property type="match status" value="1"/>
</dbReference>
<dbReference type="PIRSF" id="PIRSF036466">
    <property type="entry name" value="UCP036466"/>
    <property type="match status" value="1"/>
</dbReference>
<proteinExistence type="inferred from homology"/>
<accession>A2SJW8</accession>
<organism>
    <name type="scientific">Methylibium petroleiphilum (strain ATCC BAA-1232 / LMG 22953 / PM1)</name>
    <dbReference type="NCBI Taxonomy" id="420662"/>
    <lineage>
        <taxon>Bacteria</taxon>
        <taxon>Pseudomonadati</taxon>
        <taxon>Pseudomonadota</taxon>
        <taxon>Betaproteobacteria</taxon>
        <taxon>Burkholderiales</taxon>
        <taxon>Sphaerotilaceae</taxon>
        <taxon>Methylibium</taxon>
    </lineage>
</organism>
<feature type="chain" id="PRO_0000298596" description="UPF0391 membrane protein Mpe_A2904">
    <location>
        <begin position="1"/>
        <end position="54"/>
    </location>
</feature>
<feature type="transmembrane region" description="Helical" evidence="1">
    <location>
        <begin position="5"/>
        <end position="25"/>
    </location>
</feature>
<feature type="transmembrane region" description="Helical" evidence="1">
    <location>
        <begin position="30"/>
        <end position="50"/>
    </location>
</feature>
<name>Y2904_METPP</name>
<reference key="1">
    <citation type="journal article" date="2007" name="J. Bacteriol.">
        <title>Whole-genome analysis of the methyl tert-butyl ether-degrading beta-proteobacterium Methylibium petroleiphilum PM1.</title>
        <authorList>
            <person name="Kane S.R."/>
            <person name="Chakicherla A.Y."/>
            <person name="Chain P.S.G."/>
            <person name="Schmidt R."/>
            <person name="Shin M.W."/>
            <person name="Legler T.C."/>
            <person name="Scow K.M."/>
            <person name="Larimer F.W."/>
            <person name="Lucas S.M."/>
            <person name="Richardson P.M."/>
            <person name="Hristova K.R."/>
        </authorList>
    </citation>
    <scope>NUCLEOTIDE SEQUENCE [LARGE SCALE GENOMIC DNA]</scope>
    <source>
        <strain>ATCC BAA-1232 / LMG 22953 / PM1</strain>
    </source>
</reference>
<evidence type="ECO:0000255" key="1">
    <source>
        <dbReference type="HAMAP-Rule" id="MF_01361"/>
    </source>
</evidence>
<gene>
    <name type="ordered locus">Mpe_A2904</name>
</gene>
<sequence>MLHYAVVFFIIALIAAVFGFGGIAASAAGIAKILFFVFVVLAVASFLFGLIRKG</sequence>
<comment type="subcellular location">
    <subcellularLocation>
        <location evidence="1">Cell membrane</location>
        <topology evidence="1">Multi-pass membrane protein</topology>
    </subcellularLocation>
</comment>
<comment type="similarity">
    <text evidence="1">Belongs to the UPF0391 family.</text>
</comment>
<protein>
    <recommendedName>
        <fullName evidence="1">UPF0391 membrane protein Mpe_A2904</fullName>
    </recommendedName>
</protein>
<keyword id="KW-1003">Cell membrane</keyword>
<keyword id="KW-0472">Membrane</keyword>
<keyword id="KW-1185">Reference proteome</keyword>
<keyword id="KW-0812">Transmembrane</keyword>
<keyword id="KW-1133">Transmembrane helix</keyword>